<dbReference type="EMBL" id="AF157925">
    <property type="protein sequence ID" value="AAD50209.1"/>
    <property type="molecule type" value="Genomic_DNA"/>
</dbReference>
<dbReference type="GO" id="GO:0005743">
    <property type="term" value="C:mitochondrial inner membrane"/>
    <property type="evidence" value="ECO:0007669"/>
    <property type="project" value="UniProtKB-SubCell"/>
</dbReference>
<dbReference type="GO" id="GO:0045275">
    <property type="term" value="C:respiratory chain complex III"/>
    <property type="evidence" value="ECO:0007669"/>
    <property type="project" value="InterPro"/>
</dbReference>
<dbReference type="GO" id="GO:0046872">
    <property type="term" value="F:metal ion binding"/>
    <property type="evidence" value="ECO:0007669"/>
    <property type="project" value="UniProtKB-KW"/>
</dbReference>
<dbReference type="GO" id="GO:0008121">
    <property type="term" value="F:ubiquinol-cytochrome-c reductase activity"/>
    <property type="evidence" value="ECO:0007669"/>
    <property type="project" value="InterPro"/>
</dbReference>
<dbReference type="GO" id="GO:0006122">
    <property type="term" value="P:mitochondrial electron transport, ubiquinol to cytochrome c"/>
    <property type="evidence" value="ECO:0007669"/>
    <property type="project" value="TreeGrafter"/>
</dbReference>
<dbReference type="CDD" id="cd00290">
    <property type="entry name" value="cytochrome_b_C"/>
    <property type="match status" value="1"/>
</dbReference>
<dbReference type="CDD" id="cd00284">
    <property type="entry name" value="Cytochrome_b_N"/>
    <property type="match status" value="1"/>
</dbReference>
<dbReference type="FunFam" id="1.20.810.10:FF:000002">
    <property type="entry name" value="Cytochrome b"/>
    <property type="match status" value="1"/>
</dbReference>
<dbReference type="Gene3D" id="1.20.810.10">
    <property type="entry name" value="Cytochrome Bc1 Complex, Chain C"/>
    <property type="match status" value="1"/>
</dbReference>
<dbReference type="InterPro" id="IPR005798">
    <property type="entry name" value="Cyt_b/b6_C"/>
</dbReference>
<dbReference type="InterPro" id="IPR036150">
    <property type="entry name" value="Cyt_b/b6_C_sf"/>
</dbReference>
<dbReference type="InterPro" id="IPR005797">
    <property type="entry name" value="Cyt_b/b6_N"/>
</dbReference>
<dbReference type="InterPro" id="IPR027387">
    <property type="entry name" value="Cytb/b6-like_sf"/>
</dbReference>
<dbReference type="InterPro" id="IPR030689">
    <property type="entry name" value="Cytochrome_b"/>
</dbReference>
<dbReference type="InterPro" id="IPR048260">
    <property type="entry name" value="Cytochrome_b_C_euk/bac"/>
</dbReference>
<dbReference type="InterPro" id="IPR048259">
    <property type="entry name" value="Cytochrome_b_N_euk/bac"/>
</dbReference>
<dbReference type="InterPro" id="IPR016174">
    <property type="entry name" value="Di-haem_cyt_TM"/>
</dbReference>
<dbReference type="PANTHER" id="PTHR19271">
    <property type="entry name" value="CYTOCHROME B"/>
    <property type="match status" value="1"/>
</dbReference>
<dbReference type="PANTHER" id="PTHR19271:SF16">
    <property type="entry name" value="CYTOCHROME B"/>
    <property type="match status" value="1"/>
</dbReference>
<dbReference type="Pfam" id="PF00032">
    <property type="entry name" value="Cytochrom_B_C"/>
    <property type="match status" value="1"/>
</dbReference>
<dbReference type="Pfam" id="PF00033">
    <property type="entry name" value="Cytochrome_B"/>
    <property type="match status" value="1"/>
</dbReference>
<dbReference type="PIRSF" id="PIRSF038885">
    <property type="entry name" value="COB"/>
    <property type="match status" value="1"/>
</dbReference>
<dbReference type="SUPFAM" id="SSF81648">
    <property type="entry name" value="a domain/subunit of cytochrome bc1 complex (Ubiquinol-cytochrome c reductase)"/>
    <property type="match status" value="1"/>
</dbReference>
<dbReference type="SUPFAM" id="SSF81342">
    <property type="entry name" value="Transmembrane di-heme cytochromes"/>
    <property type="match status" value="1"/>
</dbReference>
<dbReference type="PROSITE" id="PS51003">
    <property type="entry name" value="CYTB_CTER"/>
    <property type="match status" value="1"/>
</dbReference>
<dbReference type="PROSITE" id="PS51002">
    <property type="entry name" value="CYTB_NTER"/>
    <property type="match status" value="1"/>
</dbReference>
<comment type="function">
    <text evidence="2">Component of the ubiquinol-cytochrome c reductase complex (complex III or cytochrome b-c1 complex) that is part of the mitochondrial respiratory chain. The b-c1 complex mediates electron transfer from ubiquinol to cytochrome c. Contributes to the generation of a proton gradient across the mitochondrial membrane that is then used for ATP synthesis.</text>
</comment>
<comment type="cofactor">
    <cofactor evidence="2">
        <name>heme b</name>
        <dbReference type="ChEBI" id="CHEBI:60344"/>
    </cofactor>
    <text evidence="2">Binds 2 heme b groups non-covalently.</text>
</comment>
<comment type="subunit">
    <text evidence="2">The cytochrome bc1 complex contains 11 subunits: 3 respiratory subunits (MT-CYB, CYC1 and UQCRFS1), 2 core proteins (UQCRC1 and UQCRC2) and 6 low-molecular weight proteins (UQCRH/QCR6, UQCRB/QCR7, UQCRQ/QCR8, UQCR10/QCR9, UQCR11/QCR10 and a cleavage product of UQCRFS1). This cytochrome bc1 complex then forms a dimer.</text>
</comment>
<comment type="subcellular location">
    <subcellularLocation>
        <location evidence="2">Mitochondrion inner membrane</location>
        <topology evidence="2">Multi-pass membrane protein</topology>
    </subcellularLocation>
</comment>
<comment type="miscellaneous">
    <text evidence="1">Heme 1 (or BL or b562) is low-potential and absorbs at about 562 nm, and heme 2 (or BH or b566) is high-potential and absorbs at about 566 nm.</text>
</comment>
<comment type="similarity">
    <text evidence="3 4">Belongs to the cytochrome b family.</text>
</comment>
<comment type="caution">
    <text evidence="2">The full-length protein contains only eight transmembrane helices, not nine as predicted by bioinformatics tools.</text>
</comment>
<organism>
    <name type="scientific">Xerospermophilus mohavensis</name>
    <name type="common">Mohave ground squirrel</name>
    <name type="synonym">Spermophilus mohavensis</name>
    <dbReference type="NCBI Taxonomy" id="99847"/>
    <lineage>
        <taxon>Eukaryota</taxon>
        <taxon>Metazoa</taxon>
        <taxon>Chordata</taxon>
        <taxon>Craniata</taxon>
        <taxon>Vertebrata</taxon>
        <taxon>Euteleostomi</taxon>
        <taxon>Mammalia</taxon>
        <taxon>Eutheria</taxon>
        <taxon>Euarchontoglires</taxon>
        <taxon>Glires</taxon>
        <taxon>Rodentia</taxon>
        <taxon>Sciuromorpha</taxon>
        <taxon>Sciuridae</taxon>
        <taxon>Xerinae</taxon>
        <taxon>Marmotini</taxon>
        <taxon>Xerospermophilus</taxon>
    </lineage>
</organism>
<name>CYB_XERMO</name>
<keyword id="KW-0249">Electron transport</keyword>
<keyword id="KW-0349">Heme</keyword>
<keyword id="KW-0408">Iron</keyword>
<keyword id="KW-0472">Membrane</keyword>
<keyword id="KW-0479">Metal-binding</keyword>
<keyword id="KW-0496">Mitochondrion</keyword>
<keyword id="KW-0999">Mitochondrion inner membrane</keyword>
<keyword id="KW-0679">Respiratory chain</keyword>
<keyword id="KW-0812">Transmembrane</keyword>
<keyword id="KW-1133">Transmembrane helix</keyword>
<keyword id="KW-0813">Transport</keyword>
<keyword id="KW-0830">Ubiquinone</keyword>
<geneLocation type="mitochondrion"/>
<proteinExistence type="inferred from homology"/>
<gene>
    <name type="primary">MT-CYB</name>
    <name type="synonym">COB</name>
    <name type="synonym">CYTB</name>
    <name type="synonym">MTCYB</name>
</gene>
<protein>
    <recommendedName>
        <fullName>Cytochrome b</fullName>
    </recommendedName>
    <alternativeName>
        <fullName>Complex III subunit 3</fullName>
    </alternativeName>
    <alternativeName>
        <fullName>Complex III subunit III</fullName>
    </alternativeName>
    <alternativeName>
        <fullName>Cytochrome b-c1 complex subunit 3</fullName>
    </alternativeName>
    <alternativeName>
        <fullName>Ubiquinol-cytochrome-c reductase complex cytochrome b subunit</fullName>
    </alternativeName>
</protein>
<feature type="chain" id="PRO_0000061597" description="Cytochrome b">
    <location>
        <begin position="1"/>
        <end position="379"/>
    </location>
</feature>
<feature type="transmembrane region" description="Helical" evidence="2">
    <location>
        <begin position="33"/>
        <end position="53"/>
    </location>
</feature>
<feature type="transmembrane region" description="Helical" evidence="2">
    <location>
        <begin position="77"/>
        <end position="98"/>
    </location>
</feature>
<feature type="transmembrane region" description="Helical" evidence="2">
    <location>
        <begin position="113"/>
        <end position="133"/>
    </location>
</feature>
<feature type="transmembrane region" description="Helical" evidence="2">
    <location>
        <begin position="178"/>
        <end position="198"/>
    </location>
</feature>
<feature type="transmembrane region" description="Helical" evidence="2">
    <location>
        <begin position="226"/>
        <end position="246"/>
    </location>
</feature>
<feature type="transmembrane region" description="Helical" evidence="2">
    <location>
        <begin position="288"/>
        <end position="308"/>
    </location>
</feature>
<feature type="transmembrane region" description="Helical" evidence="2">
    <location>
        <begin position="320"/>
        <end position="340"/>
    </location>
</feature>
<feature type="transmembrane region" description="Helical" evidence="2">
    <location>
        <begin position="347"/>
        <end position="367"/>
    </location>
</feature>
<feature type="binding site" description="axial binding residue" evidence="2">
    <location>
        <position position="83"/>
    </location>
    <ligand>
        <name>heme b</name>
        <dbReference type="ChEBI" id="CHEBI:60344"/>
        <label>b562</label>
    </ligand>
    <ligandPart>
        <name>Fe</name>
        <dbReference type="ChEBI" id="CHEBI:18248"/>
    </ligandPart>
</feature>
<feature type="binding site" description="axial binding residue" evidence="2">
    <location>
        <position position="97"/>
    </location>
    <ligand>
        <name>heme b</name>
        <dbReference type="ChEBI" id="CHEBI:60344"/>
        <label>b566</label>
    </ligand>
    <ligandPart>
        <name>Fe</name>
        <dbReference type="ChEBI" id="CHEBI:18248"/>
    </ligandPart>
</feature>
<feature type="binding site" description="axial binding residue" evidence="2">
    <location>
        <position position="182"/>
    </location>
    <ligand>
        <name>heme b</name>
        <dbReference type="ChEBI" id="CHEBI:60344"/>
        <label>b562</label>
    </ligand>
    <ligandPart>
        <name>Fe</name>
        <dbReference type="ChEBI" id="CHEBI:18248"/>
    </ligandPart>
</feature>
<feature type="binding site" description="axial binding residue" evidence="2">
    <location>
        <position position="196"/>
    </location>
    <ligand>
        <name>heme b</name>
        <dbReference type="ChEBI" id="CHEBI:60344"/>
        <label>b566</label>
    </ligand>
    <ligandPart>
        <name>Fe</name>
        <dbReference type="ChEBI" id="CHEBI:18248"/>
    </ligandPart>
</feature>
<feature type="binding site" evidence="2">
    <location>
        <position position="201"/>
    </location>
    <ligand>
        <name>a ubiquinone</name>
        <dbReference type="ChEBI" id="CHEBI:16389"/>
    </ligand>
</feature>
<accession>Q9TF31</accession>
<reference key="1">
    <citation type="submission" date="1999-06" db="EMBL/GenBank/DDBJ databases">
        <title>A molecular phylogeny of ground squirrels and prairie dogs.</title>
        <authorList>
            <person name="Harrison R.G."/>
            <person name="Sherman P.W."/>
            <person name="Yensen E."/>
            <person name="Hoffmann R.S."/>
            <person name="Bogdanowicz S.M."/>
        </authorList>
    </citation>
    <scope>NUCLEOTIDE SEQUENCE [GENOMIC DNA]</scope>
    <source>
        <strain>Isolate S77</strain>
    </source>
</reference>
<evidence type="ECO:0000250" key="1"/>
<evidence type="ECO:0000250" key="2">
    <source>
        <dbReference type="UniProtKB" id="P00157"/>
    </source>
</evidence>
<evidence type="ECO:0000255" key="3">
    <source>
        <dbReference type="PROSITE-ProRule" id="PRU00967"/>
    </source>
</evidence>
<evidence type="ECO:0000255" key="4">
    <source>
        <dbReference type="PROSITE-ProRule" id="PRU00968"/>
    </source>
</evidence>
<sequence length="379" mass="42796">MTNTRKTHPLIKIINHSFIDLPAPSNISAWWNFGSLLGLCLTIQILTGLFLAMHYTSDTMTAFSSVTHICRDVNYGWLIRYMHANGASMFFICLFLHVGRGLYYGSYTYFETWNIGVILLFATMATAFMGYVLPWGQMSFWGATVITNLLSAIPYIGTTLVEWIWGGFSVDKATLTRFFAFHFILPFIIAALVXVHLLFLHETGSNNPSGLVSDSDKIPFHPYYTIKDALGILLLIMALMTLVLFSPDLLGDPDNYTPANPLSTPPHIKPEWYFLFAYAILRSIPNKLGGVLALVFSILILTLFPLLHLSKQRSMMFRPLSQCIFWILVADLFTLTWIGGQPVEYPFIIIGQLASILYFSIILLILPTASLIENKLLKW</sequence>